<proteinExistence type="inferred from homology"/>
<protein>
    <recommendedName>
        <fullName evidence="1">Major DNA-binding protein</fullName>
    </recommendedName>
</protein>
<organismHost>
    <name type="scientific">Homo sapiens</name>
    <name type="common">Human</name>
    <dbReference type="NCBI Taxonomy" id="9606"/>
</organismHost>
<dbReference type="EMBL" id="AY446894">
    <property type="protein sequence ID" value="AAR31622.1"/>
    <property type="molecule type" value="Genomic_DNA"/>
</dbReference>
<dbReference type="RefSeq" id="YP_081516.1">
    <property type="nucleotide sequence ID" value="NC_006273.2"/>
</dbReference>
<dbReference type="SMR" id="F5HDQ6"/>
<dbReference type="GeneID" id="3077528"/>
<dbReference type="KEGG" id="vg:3077528"/>
<dbReference type="Reactome" id="R-HSA-9609690">
    <property type="pathway name" value="HCMV Early Events"/>
</dbReference>
<dbReference type="Reactome" id="R-HSA-9610379">
    <property type="pathway name" value="HCMV Late Events"/>
</dbReference>
<dbReference type="Proteomes" id="UP000000938">
    <property type="component" value="Segment"/>
</dbReference>
<dbReference type="GO" id="GO:0039715">
    <property type="term" value="C:nuclear viral factory"/>
    <property type="evidence" value="ECO:0000314"/>
    <property type="project" value="UniProtKB"/>
</dbReference>
<dbReference type="GO" id="GO:0003697">
    <property type="term" value="F:single-stranded DNA binding"/>
    <property type="evidence" value="ECO:0007669"/>
    <property type="project" value="InterPro"/>
</dbReference>
<dbReference type="GO" id="GO:0006260">
    <property type="term" value="P:DNA replication"/>
    <property type="evidence" value="ECO:0007669"/>
    <property type="project" value="UniProtKB-KW"/>
</dbReference>
<dbReference type="Gene3D" id="1.20.190.40">
    <property type="entry name" value="Viral ssDNA binding protein, head domain"/>
    <property type="match status" value="1"/>
</dbReference>
<dbReference type="HAMAP" id="MF_04007">
    <property type="entry name" value="HSV_DNBI"/>
    <property type="match status" value="1"/>
</dbReference>
<dbReference type="InterPro" id="IPR035989">
    <property type="entry name" value="DBP_sf"/>
</dbReference>
<dbReference type="InterPro" id="IPR043031">
    <property type="entry name" value="Viral_ssDBP_head"/>
</dbReference>
<dbReference type="InterPro" id="IPR000635">
    <property type="entry name" value="Viral_ssDNA-bd"/>
</dbReference>
<dbReference type="Pfam" id="PF00747">
    <property type="entry name" value="Viral_DNA_bp"/>
    <property type="match status" value="1"/>
</dbReference>
<dbReference type="SUPFAM" id="SSF118208">
    <property type="entry name" value="Viral ssDNA binding protein"/>
    <property type="match status" value="1"/>
</dbReference>
<organism>
    <name type="scientific">Human cytomegalovirus (strain Merlin)</name>
    <name type="common">HHV-5</name>
    <name type="synonym">Human herpesvirus 5</name>
    <dbReference type="NCBI Taxonomy" id="295027"/>
    <lineage>
        <taxon>Viruses</taxon>
        <taxon>Duplodnaviria</taxon>
        <taxon>Heunggongvirae</taxon>
        <taxon>Peploviricota</taxon>
        <taxon>Herviviricetes</taxon>
        <taxon>Herpesvirales</taxon>
        <taxon>Orthoherpesviridae</taxon>
        <taxon>Betaherpesvirinae</taxon>
        <taxon>Cytomegalovirus</taxon>
        <taxon>Cytomegalovirus humanbeta5</taxon>
        <taxon>Human cytomegalovirus</taxon>
    </lineage>
</organism>
<evidence type="ECO:0000255" key="1">
    <source>
        <dbReference type="HAMAP-Rule" id="MF_04007"/>
    </source>
</evidence>
<evidence type="ECO:0000256" key="2">
    <source>
        <dbReference type="SAM" id="MobiDB-lite"/>
    </source>
</evidence>
<comment type="function">
    <text evidence="1">Plays several crucial roles in viral infection. Participates in the opening of the viral DNA origin to initiate replication by interacting with the origin-binding protein. May disrupt loops, hairpins and other secondary structures present on ssDNA to reduce and eliminate pausing of viral DNA polymerase at specific sites during elongation. Promotes viral DNA recombination by performing strand-transfer, characterized by the ability to transfer a DNA strand from a linear duplex to a complementary single-stranded DNA circle. Can also catalyze the renaturation of complementary single strands. Additionally, reorganizes the host cell nucleus, leading to the formation of prereplicative sites and replication compartments. This process is driven by the protein which can form double-helical filaments in the absence of DNA.</text>
</comment>
<comment type="subunit">
    <text evidence="1">Homooligomers. Forms double-helical filaments necessary for the formation of replication compartments within the host nucleus. Interacts with the origin-binding protein. Interacts with the helicase primase complex; this interaction stimulates primer synthesis activity of the helicase-primase complex. Interacts with the DNA polymerase. Interacts with the alkaline exonuclease; this interaction increases its nuclease processivity.</text>
</comment>
<comment type="subcellular location">
    <subcellularLocation>
        <location evidence="1">Host nucleus</location>
    </subcellularLocation>
    <text evidence="1">In the absence of DNA replication, found in the nuclear framework-associated structures (prereplicative sites). As viral DNA replication proceeds, it migrates to globular intranuclear structures (replication compartments).</text>
</comment>
<comment type="similarity">
    <text evidence="1">Belongs to the herpesviridae major DNA-binding protein family.</text>
</comment>
<gene>
    <name evidence="1" type="primary">DBP</name>
    <name type="synonym">UL57</name>
</gene>
<name>DNBI_HCMVM</name>
<accession>F5HDQ6</accession>
<keyword id="KW-0235">DNA replication</keyword>
<keyword id="KW-0238">DNA-binding</keyword>
<keyword id="KW-1048">Host nucleus</keyword>
<keyword id="KW-1185">Reference proteome</keyword>
<feature type="chain" id="PRO_0000416448" description="Major DNA-binding protein">
    <location>
        <begin position="1"/>
        <end position="1235"/>
    </location>
</feature>
<feature type="region of interest" description="Disordered" evidence="2">
    <location>
        <begin position="536"/>
        <end position="584"/>
    </location>
</feature>
<feature type="region of interest" description="Disordered" evidence="2">
    <location>
        <begin position="1214"/>
        <end position="1235"/>
    </location>
</feature>
<feature type="region of interest" description="Required for nuclear localization" evidence="1">
    <location>
        <begin position="1232"/>
        <end position="1235"/>
    </location>
</feature>
<feature type="short sequence motif" description="Required for filament formation" evidence="1">
    <location>
        <begin position="846"/>
        <end position="847"/>
    </location>
</feature>
<feature type="compositionally biased region" description="Gly residues" evidence="2">
    <location>
        <begin position="545"/>
        <end position="584"/>
    </location>
</feature>
<feature type="compositionally biased region" description="Gly residues" evidence="2">
    <location>
        <begin position="1214"/>
        <end position="1226"/>
    </location>
</feature>
<reference key="1">
    <citation type="journal article" date="2004" name="J. Gen. Virol.">
        <title>Genetic content of wild-type human cytomegalovirus.</title>
        <authorList>
            <person name="Dolan A."/>
            <person name="Cunningham C."/>
            <person name="Hector R.D."/>
            <person name="Hassan-Walker A.F."/>
            <person name="Lee L."/>
            <person name="Addison C."/>
            <person name="Dargan D.J."/>
            <person name="McGeoch D.J."/>
            <person name="Gatherer D."/>
            <person name="Emery V.C."/>
            <person name="Griffiths P.D."/>
            <person name="Sinzger C."/>
            <person name="McSharry B.P."/>
            <person name="Wilkinson G.W.G."/>
            <person name="Davison A.J."/>
        </authorList>
    </citation>
    <scope>NUCLEOTIDE SEQUENCE [LARGE SCALE GENOMIC DNA]</scope>
    <source>
        <strain>Merlin</strain>
    </source>
</reference>
<sequence length="1235" mass="133849">MSHEELTALAPVGPAAFLYFSRLNAETQEILATLSLCDRSSSVVIAPLLAGLTVEADFGVSVRTPVLCYDGGVLTKVTSFCPFALYFHHTQGIVAFTEDHGDVHRLCEDARQKYALEAYTPEADRVPTDLAALCAAVGCQASETTVHVVVGNGLKEFLFAGQLIPCVEEATTVRLHGGEAVRVPLYPPTLFNSLQLDAEADEVSLDARSAFVEARGLYVPAVSETLFYYVYTSWCQSLRFSEPRVLIEAALRQFVHDSQQSVKLAPHKRYLGYMSQRLSSLEKDHLMLSDAVVCELAFSFASVFFDSAYQPAESMLFSEWPLVTNATDHRDLIRALTELKLHLSTHVAALVFSANSVLYQHRLVYLQSSARHPSAGGTASQETLLKAIQFTNGLSAACEDVYNDARKVLKFQGAPLKDERYGPQHLALVCGTCPQLVSGFVWYLNRVSVYNTGLSGSSTLTNHLVGCAAGLCEACGGTCCHTCYQTAFVRVRTRLPVVPKQPKKEPCVITVQSRFLNDVDILGSFGRRYNVDAKDGGLDGKGDDGVPGGGAGGGGGRDVSGGPSDGLGGGRGGGGGGDSGGMMGRGGRMLGASVDRTYRLNRILDYCRKMRLIDPVTGEDTFSAHGKSDFVAVFSALNKFVDDEALGFVSEVRLKSSRDEVAGATQAFNLDLNPYAVAFQPLLAYAYFRSVFYVIQNVALITATSYIVDNPLTTNLVSKWMTQHFQSIHGAFSTTSSRKGFLFTKQIKSSKNSDHDRLLDFRLYAQGTYAVVPMEIKLSRLSVPTLIMVRVKNRPIYRAGKGNAGSVFFRRDHVPRRNPAKGCLGFLLYRHHERLFPECGLPCLQFWQKVCSNALPKNVPIGDMGEFNAFVKFLVAVTADYQEHDLLDVAPDCVLSYVESRFHNKFLCYYGFKDYIGSLHGLTTRLTTQNHAQFPHVLGASPRFSSPAEFALHVKGLKTAGVPAPMAATVARESLVRSVFEHRSLVTVPVSVEKYAGINNSKEIYQFGQIGYFSGNGVERSLNVSSMSGQDYRFMRQRYLLATRLADVLIKRSRRENVLFDADLIKNRVMLALDAENLDCDPEVMAVYEILSVREEIPASDDVLFFVDGCEALAASLMDKFAALQEQGVEDFSLENLRRVLDADAQRLTDAAGGEVHDLSALFAPSGVGAASGVGGGGLLLGESVAGNSICFGVPGETGGGCFLVNAGEDEAGGVGGSSGGGGGSGLLPAKRSRL</sequence>